<evidence type="ECO:0000255" key="1">
    <source>
        <dbReference type="HAMAP-Rule" id="MF_00193"/>
    </source>
</evidence>
<protein>
    <recommendedName>
        <fullName evidence="1">NH(3)-dependent NAD(+) synthetase</fullName>
        <ecNumber evidence="1">6.3.1.5</ecNumber>
    </recommendedName>
</protein>
<sequence length="257" mass="28616">MTLTNPSALVNQLVDFLRQELAQRGFKKVVVGLSGGVDSAVVARLCQEAIGENLHALLMPSSVSSKESVEHALLLCERFNLSHHIQSIAPLELAFRELHPEATPLRIGNACARFRMITLYDFSFKENRLVIGTGNKSEILLGYGTLYGDTACALNPIGDLYKTEIFQLAKFLSIPDEIIQKAPSADLFEGQSDEKELGFSYNDMDQLLFDHIELKLSKEELLAKGHAKELVEMVLKRISTNKFKSEMPPIAQVRGRL</sequence>
<name>NADE_WOLSU</name>
<feature type="chain" id="PRO_0000152219" description="NH(3)-dependent NAD(+) synthetase">
    <location>
        <begin position="1"/>
        <end position="257"/>
    </location>
</feature>
<feature type="binding site" evidence="1">
    <location>
        <begin position="32"/>
        <end position="39"/>
    </location>
    <ligand>
        <name>ATP</name>
        <dbReference type="ChEBI" id="CHEBI:30616"/>
    </ligand>
</feature>
<feature type="binding site" evidence="1">
    <location>
        <position position="38"/>
    </location>
    <ligand>
        <name>Mg(2+)</name>
        <dbReference type="ChEBI" id="CHEBI:18420"/>
    </ligand>
</feature>
<feature type="binding site" evidence="1">
    <location>
        <position position="113"/>
    </location>
    <ligand>
        <name>deamido-NAD(+)</name>
        <dbReference type="ChEBI" id="CHEBI:58437"/>
    </ligand>
</feature>
<feature type="binding site" evidence="1">
    <location>
        <position position="133"/>
    </location>
    <ligand>
        <name>ATP</name>
        <dbReference type="ChEBI" id="CHEBI:30616"/>
    </ligand>
</feature>
<feature type="binding site" evidence="1">
    <location>
        <position position="138"/>
    </location>
    <ligand>
        <name>Mg(2+)</name>
        <dbReference type="ChEBI" id="CHEBI:18420"/>
    </ligand>
</feature>
<feature type="binding site" evidence="1">
    <location>
        <position position="162"/>
    </location>
    <ligand>
        <name>ATP</name>
        <dbReference type="ChEBI" id="CHEBI:30616"/>
    </ligand>
</feature>
<feature type="binding site" evidence="1">
    <location>
        <position position="184"/>
    </location>
    <ligand>
        <name>ATP</name>
        <dbReference type="ChEBI" id="CHEBI:30616"/>
    </ligand>
</feature>
<gene>
    <name evidence="1" type="primary">nadE</name>
    <name type="ordered locus">WS0206</name>
</gene>
<keyword id="KW-0067">ATP-binding</keyword>
<keyword id="KW-0436">Ligase</keyword>
<keyword id="KW-0460">Magnesium</keyword>
<keyword id="KW-0479">Metal-binding</keyword>
<keyword id="KW-0520">NAD</keyword>
<keyword id="KW-0547">Nucleotide-binding</keyword>
<keyword id="KW-1185">Reference proteome</keyword>
<organism>
    <name type="scientific">Wolinella succinogenes (strain ATCC 29543 / DSM 1740 / CCUG 13145 / JCM 31913 / LMG 7466 / NCTC 11488 / FDC 602W)</name>
    <name type="common">Vibrio succinogenes</name>
    <dbReference type="NCBI Taxonomy" id="273121"/>
    <lineage>
        <taxon>Bacteria</taxon>
        <taxon>Pseudomonadati</taxon>
        <taxon>Campylobacterota</taxon>
        <taxon>Epsilonproteobacteria</taxon>
        <taxon>Campylobacterales</taxon>
        <taxon>Helicobacteraceae</taxon>
        <taxon>Wolinella</taxon>
    </lineage>
</organism>
<dbReference type="EC" id="6.3.1.5" evidence="1"/>
<dbReference type="EMBL" id="BX571657">
    <property type="protein sequence ID" value="CAE09364.1"/>
    <property type="molecule type" value="Genomic_DNA"/>
</dbReference>
<dbReference type="RefSeq" id="WP_011138164.1">
    <property type="nucleotide sequence ID" value="NC_005090.1"/>
</dbReference>
<dbReference type="SMR" id="Q7MAJ5"/>
<dbReference type="STRING" id="273121.WS0206"/>
<dbReference type="KEGG" id="wsu:WS0206"/>
<dbReference type="eggNOG" id="COG0171">
    <property type="taxonomic scope" value="Bacteria"/>
</dbReference>
<dbReference type="HOGENOM" id="CLU_059327_1_2_7"/>
<dbReference type="UniPathway" id="UPA00253">
    <property type="reaction ID" value="UER00333"/>
</dbReference>
<dbReference type="Proteomes" id="UP000000422">
    <property type="component" value="Chromosome"/>
</dbReference>
<dbReference type="GO" id="GO:0005737">
    <property type="term" value="C:cytoplasm"/>
    <property type="evidence" value="ECO:0007669"/>
    <property type="project" value="InterPro"/>
</dbReference>
<dbReference type="GO" id="GO:0005524">
    <property type="term" value="F:ATP binding"/>
    <property type="evidence" value="ECO:0007669"/>
    <property type="project" value="UniProtKB-UniRule"/>
</dbReference>
<dbReference type="GO" id="GO:0004359">
    <property type="term" value="F:glutaminase activity"/>
    <property type="evidence" value="ECO:0007669"/>
    <property type="project" value="InterPro"/>
</dbReference>
<dbReference type="GO" id="GO:0046872">
    <property type="term" value="F:metal ion binding"/>
    <property type="evidence" value="ECO:0007669"/>
    <property type="project" value="UniProtKB-KW"/>
</dbReference>
<dbReference type="GO" id="GO:0003952">
    <property type="term" value="F:NAD+ synthase (glutamine-hydrolyzing) activity"/>
    <property type="evidence" value="ECO:0007669"/>
    <property type="project" value="InterPro"/>
</dbReference>
<dbReference type="GO" id="GO:0008795">
    <property type="term" value="F:NAD+ synthase activity"/>
    <property type="evidence" value="ECO:0007669"/>
    <property type="project" value="UniProtKB-UniRule"/>
</dbReference>
<dbReference type="GO" id="GO:0009435">
    <property type="term" value="P:NAD biosynthetic process"/>
    <property type="evidence" value="ECO:0007669"/>
    <property type="project" value="UniProtKB-UniRule"/>
</dbReference>
<dbReference type="CDD" id="cd00553">
    <property type="entry name" value="NAD_synthase"/>
    <property type="match status" value="1"/>
</dbReference>
<dbReference type="FunFam" id="3.40.50.620:FF:000106">
    <property type="entry name" value="Glutamine-dependent NAD(+) synthetase"/>
    <property type="match status" value="1"/>
</dbReference>
<dbReference type="Gene3D" id="3.40.50.620">
    <property type="entry name" value="HUPs"/>
    <property type="match status" value="1"/>
</dbReference>
<dbReference type="HAMAP" id="MF_00193">
    <property type="entry name" value="NadE_ammonia_dep"/>
    <property type="match status" value="1"/>
</dbReference>
<dbReference type="InterPro" id="IPR022310">
    <property type="entry name" value="NAD/GMP_synthase"/>
</dbReference>
<dbReference type="InterPro" id="IPR003694">
    <property type="entry name" value="NAD_synthase"/>
</dbReference>
<dbReference type="InterPro" id="IPR022926">
    <property type="entry name" value="NH(3)-dep_NAD(+)_synth"/>
</dbReference>
<dbReference type="InterPro" id="IPR014729">
    <property type="entry name" value="Rossmann-like_a/b/a_fold"/>
</dbReference>
<dbReference type="NCBIfam" id="TIGR00552">
    <property type="entry name" value="nadE"/>
    <property type="match status" value="1"/>
</dbReference>
<dbReference type="NCBIfam" id="NF010587">
    <property type="entry name" value="PRK13980.1"/>
    <property type="match status" value="1"/>
</dbReference>
<dbReference type="PANTHER" id="PTHR23090:SF9">
    <property type="entry name" value="GLUTAMINE-DEPENDENT NAD(+) SYNTHETASE"/>
    <property type="match status" value="1"/>
</dbReference>
<dbReference type="PANTHER" id="PTHR23090">
    <property type="entry name" value="NH 3 /GLUTAMINE-DEPENDENT NAD + SYNTHETASE"/>
    <property type="match status" value="1"/>
</dbReference>
<dbReference type="Pfam" id="PF02540">
    <property type="entry name" value="NAD_synthase"/>
    <property type="match status" value="1"/>
</dbReference>
<dbReference type="SUPFAM" id="SSF52402">
    <property type="entry name" value="Adenine nucleotide alpha hydrolases-like"/>
    <property type="match status" value="1"/>
</dbReference>
<accession>Q7MAJ5</accession>
<proteinExistence type="inferred from homology"/>
<reference key="1">
    <citation type="journal article" date="2003" name="Proc. Natl. Acad. Sci. U.S.A.">
        <title>Complete genome sequence and analysis of Wolinella succinogenes.</title>
        <authorList>
            <person name="Baar C."/>
            <person name="Eppinger M."/>
            <person name="Raddatz G."/>
            <person name="Simon J."/>
            <person name="Lanz C."/>
            <person name="Klimmek O."/>
            <person name="Nandakumar R."/>
            <person name="Gross R."/>
            <person name="Rosinus A."/>
            <person name="Keller H."/>
            <person name="Jagtap P."/>
            <person name="Linke B."/>
            <person name="Meyer F."/>
            <person name="Lederer H."/>
            <person name="Schuster S.C."/>
        </authorList>
    </citation>
    <scope>NUCLEOTIDE SEQUENCE [LARGE SCALE GENOMIC DNA]</scope>
    <source>
        <strain>ATCC 29543 / DSM 1740 / CCUG 13145 / JCM 31913 / LMG 7466 / NCTC 11488 / FDC 602W</strain>
    </source>
</reference>
<comment type="function">
    <text evidence="1">Catalyzes the ATP-dependent amidation of deamido-NAD to form NAD. Uses ammonia as a nitrogen source.</text>
</comment>
<comment type="catalytic activity">
    <reaction evidence="1">
        <text>deamido-NAD(+) + NH4(+) + ATP = AMP + diphosphate + NAD(+) + H(+)</text>
        <dbReference type="Rhea" id="RHEA:21188"/>
        <dbReference type="ChEBI" id="CHEBI:15378"/>
        <dbReference type="ChEBI" id="CHEBI:28938"/>
        <dbReference type="ChEBI" id="CHEBI:30616"/>
        <dbReference type="ChEBI" id="CHEBI:33019"/>
        <dbReference type="ChEBI" id="CHEBI:57540"/>
        <dbReference type="ChEBI" id="CHEBI:58437"/>
        <dbReference type="ChEBI" id="CHEBI:456215"/>
        <dbReference type="EC" id="6.3.1.5"/>
    </reaction>
</comment>
<comment type="pathway">
    <text evidence="1">Cofactor biosynthesis; NAD(+) biosynthesis; NAD(+) from deamido-NAD(+) (ammonia route): step 1/1.</text>
</comment>
<comment type="subunit">
    <text evidence="1">Homodimer.</text>
</comment>
<comment type="similarity">
    <text evidence="1">Belongs to the NAD synthetase family.</text>
</comment>